<name>GCSH_CROS8</name>
<evidence type="ECO:0000255" key="1">
    <source>
        <dbReference type="HAMAP-Rule" id="MF_00272"/>
    </source>
</evidence>
<evidence type="ECO:0000255" key="2">
    <source>
        <dbReference type="PROSITE-ProRule" id="PRU01066"/>
    </source>
</evidence>
<dbReference type="EMBL" id="CP000783">
    <property type="protein sequence ID" value="ABU75722.1"/>
    <property type="molecule type" value="Genomic_DNA"/>
</dbReference>
<dbReference type="RefSeq" id="WP_004385667.1">
    <property type="nucleotide sequence ID" value="NC_009778.1"/>
</dbReference>
<dbReference type="SMR" id="A7MR83"/>
<dbReference type="GeneID" id="56733382"/>
<dbReference type="KEGG" id="esa:ESA_00425"/>
<dbReference type="HOGENOM" id="CLU_097408_2_1_6"/>
<dbReference type="Proteomes" id="UP000000260">
    <property type="component" value="Chromosome"/>
</dbReference>
<dbReference type="GO" id="GO:0005829">
    <property type="term" value="C:cytosol"/>
    <property type="evidence" value="ECO:0007669"/>
    <property type="project" value="TreeGrafter"/>
</dbReference>
<dbReference type="GO" id="GO:0005960">
    <property type="term" value="C:glycine cleavage complex"/>
    <property type="evidence" value="ECO:0007669"/>
    <property type="project" value="InterPro"/>
</dbReference>
<dbReference type="GO" id="GO:0019464">
    <property type="term" value="P:glycine decarboxylation via glycine cleavage system"/>
    <property type="evidence" value="ECO:0007669"/>
    <property type="project" value="UniProtKB-UniRule"/>
</dbReference>
<dbReference type="CDD" id="cd06848">
    <property type="entry name" value="GCS_H"/>
    <property type="match status" value="1"/>
</dbReference>
<dbReference type="FunFam" id="2.40.50.100:FF:000011">
    <property type="entry name" value="Glycine cleavage system H protein"/>
    <property type="match status" value="1"/>
</dbReference>
<dbReference type="Gene3D" id="2.40.50.100">
    <property type="match status" value="1"/>
</dbReference>
<dbReference type="HAMAP" id="MF_00272">
    <property type="entry name" value="GcvH"/>
    <property type="match status" value="1"/>
</dbReference>
<dbReference type="InterPro" id="IPR003016">
    <property type="entry name" value="2-oxoA_DH_lipoyl-BS"/>
</dbReference>
<dbReference type="InterPro" id="IPR000089">
    <property type="entry name" value="Biotin_lipoyl"/>
</dbReference>
<dbReference type="InterPro" id="IPR002930">
    <property type="entry name" value="GCV_H"/>
</dbReference>
<dbReference type="InterPro" id="IPR033753">
    <property type="entry name" value="GCV_H/Fam206"/>
</dbReference>
<dbReference type="InterPro" id="IPR017453">
    <property type="entry name" value="GCV_H_sub"/>
</dbReference>
<dbReference type="InterPro" id="IPR011053">
    <property type="entry name" value="Single_hybrid_motif"/>
</dbReference>
<dbReference type="NCBIfam" id="TIGR00527">
    <property type="entry name" value="gcvH"/>
    <property type="match status" value="1"/>
</dbReference>
<dbReference type="NCBIfam" id="NF002270">
    <property type="entry name" value="PRK01202.1"/>
    <property type="match status" value="1"/>
</dbReference>
<dbReference type="PANTHER" id="PTHR11715">
    <property type="entry name" value="GLYCINE CLEAVAGE SYSTEM H PROTEIN"/>
    <property type="match status" value="1"/>
</dbReference>
<dbReference type="PANTHER" id="PTHR11715:SF3">
    <property type="entry name" value="GLYCINE CLEAVAGE SYSTEM H PROTEIN-RELATED"/>
    <property type="match status" value="1"/>
</dbReference>
<dbReference type="Pfam" id="PF01597">
    <property type="entry name" value="GCV_H"/>
    <property type="match status" value="1"/>
</dbReference>
<dbReference type="SUPFAM" id="SSF51230">
    <property type="entry name" value="Single hybrid motif"/>
    <property type="match status" value="1"/>
</dbReference>
<dbReference type="PROSITE" id="PS50968">
    <property type="entry name" value="BIOTINYL_LIPOYL"/>
    <property type="match status" value="1"/>
</dbReference>
<dbReference type="PROSITE" id="PS00189">
    <property type="entry name" value="LIPOYL"/>
    <property type="match status" value="1"/>
</dbReference>
<sequence length="129" mass="13836">MSNVPNELKYSKEHEWLRKEADGTYTVGITEHAQELLGDMVFVDLPDVGTTVNAGDDCAVAESVKAASDIYAPVSGEIVAVNDALSDSPELVNSEPYGQGWIFKIKASDEAEVAALLDASAYEALLEDE</sequence>
<proteinExistence type="inferred from homology"/>
<protein>
    <recommendedName>
        <fullName evidence="1">Glycine cleavage system H protein</fullName>
    </recommendedName>
</protein>
<organism>
    <name type="scientific">Cronobacter sakazakii (strain ATCC BAA-894)</name>
    <name type="common">Enterobacter sakazakii</name>
    <dbReference type="NCBI Taxonomy" id="290339"/>
    <lineage>
        <taxon>Bacteria</taxon>
        <taxon>Pseudomonadati</taxon>
        <taxon>Pseudomonadota</taxon>
        <taxon>Gammaproteobacteria</taxon>
        <taxon>Enterobacterales</taxon>
        <taxon>Enterobacteriaceae</taxon>
        <taxon>Cronobacter</taxon>
    </lineage>
</organism>
<reference key="1">
    <citation type="journal article" date="2010" name="PLoS ONE">
        <title>Genome sequence of Cronobacter sakazakii BAA-894 and comparative genomic hybridization analysis with other Cronobacter species.</title>
        <authorList>
            <person name="Kucerova E."/>
            <person name="Clifton S.W."/>
            <person name="Xia X.Q."/>
            <person name="Long F."/>
            <person name="Porwollik S."/>
            <person name="Fulton L."/>
            <person name="Fronick C."/>
            <person name="Minx P."/>
            <person name="Kyung K."/>
            <person name="Warren W."/>
            <person name="Fulton R."/>
            <person name="Feng D."/>
            <person name="Wollam A."/>
            <person name="Shah N."/>
            <person name="Bhonagiri V."/>
            <person name="Nash W.E."/>
            <person name="Hallsworth-Pepin K."/>
            <person name="Wilson R.K."/>
            <person name="McClelland M."/>
            <person name="Forsythe S.J."/>
        </authorList>
    </citation>
    <scope>NUCLEOTIDE SEQUENCE [LARGE SCALE GENOMIC DNA]</scope>
    <source>
        <strain>ATCC BAA-894</strain>
    </source>
</reference>
<comment type="function">
    <text evidence="1">The glycine cleavage system catalyzes the degradation of glycine. The H protein shuttles the methylamine group of glycine from the P protein to the T protein.</text>
</comment>
<comment type="cofactor">
    <cofactor evidence="1">
        <name>(R)-lipoate</name>
        <dbReference type="ChEBI" id="CHEBI:83088"/>
    </cofactor>
    <text evidence="1">Binds 1 lipoyl cofactor covalently.</text>
</comment>
<comment type="subunit">
    <text evidence="1">The glycine cleavage system is composed of four proteins: P, T, L and H.</text>
</comment>
<comment type="similarity">
    <text evidence="1">Belongs to the GcvH family.</text>
</comment>
<feature type="chain" id="PRO_1000022195" description="Glycine cleavage system H protein">
    <location>
        <begin position="1"/>
        <end position="129"/>
    </location>
</feature>
<feature type="domain" description="Lipoyl-binding" evidence="2">
    <location>
        <begin position="24"/>
        <end position="106"/>
    </location>
</feature>
<feature type="modified residue" description="N6-lipoyllysine" evidence="1">
    <location>
        <position position="65"/>
    </location>
</feature>
<gene>
    <name evidence="1" type="primary">gcvH</name>
    <name type="ordered locus">ESA_00425</name>
</gene>
<keyword id="KW-0450">Lipoyl</keyword>
<keyword id="KW-1185">Reference proteome</keyword>
<accession>A7MR83</accession>